<accession>P55629</accession>
<protein>
    <recommendedName>
        <fullName>Putative HTH-type transcriptional regulator y4qH</fullName>
    </recommendedName>
</protein>
<comment type="similarity">
    <text evidence="2">Belongs to the autoinducer-regulated transcriptional regulatory protein family.</text>
</comment>
<gene>
    <name type="ordered locus">NGR_a01900</name>
    <name type="ORF">y4qH</name>
</gene>
<feature type="chain" id="PRO_0000184203" description="Putative HTH-type transcriptional regulator y4qH">
    <location>
        <begin position="1"/>
        <end position="326"/>
    </location>
</feature>
<feature type="domain" description="HTH luxR-type" evidence="1">
    <location>
        <begin position="257"/>
        <end position="322"/>
    </location>
</feature>
<feature type="DNA-binding region" description="H-T-H motif" evidence="1">
    <location>
        <begin position="281"/>
        <end position="300"/>
    </location>
</feature>
<name>Y4QH_SINFN</name>
<keyword id="KW-0238">DNA-binding</keyword>
<keyword id="KW-0614">Plasmid</keyword>
<keyword id="KW-1185">Reference proteome</keyword>
<keyword id="KW-0804">Transcription</keyword>
<keyword id="KW-0805">Transcription regulation</keyword>
<organism>
    <name type="scientific">Sinorhizobium fredii (strain NBRC 101917 / NGR234)</name>
    <dbReference type="NCBI Taxonomy" id="394"/>
    <lineage>
        <taxon>Bacteria</taxon>
        <taxon>Pseudomonadati</taxon>
        <taxon>Pseudomonadota</taxon>
        <taxon>Alphaproteobacteria</taxon>
        <taxon>Hyphomicrobiales</taxon>
        <taxon>Rhizobiaceae</taxon>
        <taxon>Sinorhizobium/Ensifer group</taxon>
        <taxon>Sinorhizobium</taxon>
    </lineage>
</organism>
<dbReference type="EMBL" id="U00090">
    <property type="protein sequence ID" value="AAB92463.1"/>
    <property type="molecule type" value="Genomic_DNA"/>
</dbReference>
<dbReference type="RefSeq" id="NP_444035.1">
    <property type="nucleotide sequence ID" value="NC_000914.2"/>
</dbReference>
<dbReference type="RefSeq" id="WP_010875224.1">
    <property type="nucleotide sequence ID" value="NC_000914.2"/>
</dbReference>
<dbReference type="SMR" id="P55629"/>
<dbReference type="KEGG" id="rhi:NGR_a01900"/>
<dbReference type="eggNOG" id="COG2771">
    <property type="taxonomic scope" value="Bacteria"/>
</dbReference>
<dbReference type="HOGENOM" id="CLU_072786_3_1_5"/>
<dbReference type="OrthoDB" id="3170288at2"/>
<dbReference type="Proteomes" id="UP000001054">
    <property type="component" value="Plasmid pNGR234a"/>
</dbReference>
<dbReference type="GO" id="GO:0003677">
    <property type="term" value="F:DNA binding"/>
    <property type="evidence" value="ECO:0007669"/>
    <property type="project" value="UniProtKB-KW"/>
</dbReference>
<dbReference type="GO" id="GO:0006355">
    <property type="term" value="P:regulation of DNA-templated transcription"/>
    <property type="evidence" value="ECO:0007669"/>
    <property type="project" value="InterPro"/>
</dbReference>
<dbReference type="CDD" id="cd06170">
    <property type="entry name" value="LuxR_C_like"/>
    <property type="match status" value="1"/>
</dbReference>
<dbReference type="Gene3D" id="3.30.450.80">
    <property type="entry name" value="Transcription factor LuxR-like, autoinducer-binding domain"/>
    <property type="match status" value="1"/>
</dbReference>
<dbReference type="Gene3D" id="1.10.10.10">
    <property type="entry name" value="Winged helix-like DNA-binding domain superfamily/Winged helix DNA-binding domain"/>
    <property type="match status" value="1"/>
</dbReference>
<dbReference type="InterPro" id="IPR016032">
    <property type="entry name" value="Sig_transdc_resp-reg_C-effctor"/>
</dbReference>
<dbReference type="InterPro" id="IPR005143">
    <property type="entry name" value="TF_LuxR_autoind-bd_dom"/>
</dbReference>
<dbReference type="InterPro" id="IPR036693">
    <property type="entry name" value="TF_LuxR_autoind-bd_dom_sf"/>
</dbReference>
<dbReference type="InterPro" id="IPR000792">
    <property type="entry name" value="Tscrpt_reg_LuxR_C"/>
</dbReference>
<dbReference type="InterPro" id="IPR036388">
    <property type="entry name" value="WH-like_DNA-bd_sf"/>
</dbReference>
<dbReference type="PANTHER" id="PTHR44688">
    <property type="entry name" value="DNA-BINDING TRANSCRIPTIONAL ACTIVATOR DEVR_DOSR"/>
    <property type="match status" value="1"/>
</dbReference>
<dbReference type="PANTHER" id="PTHR44688:SF16">
    <property type="entry name" value="DNA-BINDING TRANSCRIPTIONAL ACTIVATOR DEVR_DOSR"/>
    <property type="match status" value="1"/>
</dbReference>
<dbReference type="Pfam" id="PF03472">
    <property type="entry name" value="Autoind_bind"/>
    <property type="match status" value="1"/>
</dbReference>
<dbReference type="Pfam" id="PF00196">
    <property type="entry name" value="GerE"/>
    <property type="match status" value="1"/>
</dbReference>
<dbReference type="PRINTS" id="PR00038">
    <property type="entry name" value="HTHLUXR"/>
</dbReference>
<dbReference type="SMART" id="SM00421">
    <property type="entry name" value="HTH_LUXR"/>
    <property type="match status" value="1"/>
</dbReference>
<dbReference type="SUPFAM" id="SSF46894">
    <property type="entry name" value="C-terminal effector domain of the bipartite response regulators"/>
    <property type="match status" value="1"/>
</dbReference>
<dbReference type="SUPFAM" id="SSF75516">
    <property type="entry name" value="Pheromone-binding domain of LuxR-like quorum-sensing transcription factors"/>
    <property type="match status" value="1"/>
</dbReference>
<dbReference type="PROSITE" id="PS00622">
    <property type="entry name" value="HTH_LUXR_1"/>
    <property type="match status" value="1"/>
</dbReference>
<dbReference type="PROSITE" id="PS50043">
    <property type="entry name" value="HTH_LUXR_2"/>
    <property type="match status" value="1"/>
</dbReference>
<geneLocation type="plasmid">
    <name>sym pNGR234a</name>
</geneLocation>
<reference key="1">
    <citation type="journal article" date="1997" name="Nature">
        <title>Molecular basis of symbiosis between Rhizobium and legumes.</title>
        <authorList>
            <person name="Freiberg C.A."/>
            <person name="Fellay R."/>
            <person name="Bairoch A."/>
            <person name="Broughton W.J."/>
            <person name="Rosenthal A."/>
            <person name="Perret X."/>
        </authorList>
    </citation>
    <scope>NUCLEOTIDE SEQUENCE [LARGE SCALE GENOMIC DNA]</scope>
    <source>
        <strain>NBRC 101917 / NGR234</strain>
    </source>
</reference>
<reference key="2">
    <citation type="journal article" date="2009" name="Appl. Environ. Microbiol.">
        <title>Rhizobium sp. strain NGR234 possesses a remarkable number of secretion systems.</title>
        <authorList>
            <person name="Schmeisser C."/>
            <person name="Liesegang H."/>
            <person name="Krysciak D."/>
            <person name="Bakkou N."/>
            <person name="Le Quere A."/>
            <person name="Wollherr A."/>
            <person name="Heinemeyer I."/>
            <person name="Morgenstern B."/>
            <person name="Pommerening-Roeser A."/>
            <person name="Flores M."/>
            <person name="Palacios R."/>
            <person name="Brenner S."/>
            <person name="Gottschalk G."/>
            <person name="Schmitz R.A."/>
            <person name="Broughton W.J."/>
            <person name="Perret X."/>
            <person name="Strittmatter A.W."/>
            <person name="Streit W.R."/>
        </authorList>
    </citation>
    <scope>NUCLEOTIDE SEQUENCE [LARGE SCALE GENOMIC DNA]</scope>
    <source>
        <strain>NBRC 101917 / NGR234</strain>
    </source>
</reference>
<evidence type="ECO:0000255" key="1">
    <source>
        <dbReference type="PROSITE-ProRule" id="PRU00411"/>
    </source>
</evidence>
<evidence type="ECO:0000305" key="2"/>
<sequence length="326" mass="35878">MPDLHRLALSALQYRPVGAQSGNASSAAASCTGDYMAGDSSLERDCGRLADGCSFPQVRGSATGVSDQSLGGSIHFSNAGRDEYVVELGRLLDLTDGVAQPKKLFDLLSAFAFKFGCKWLAYGPLTSDHKALNRVKCDSEEILNYPDGWRERCLEMGYETIAPVIKESRMGAGPIRWSDMYSDASTTEYERRMFDEAAMFGLRSGITVPLRGPRGSCAIMSFARHCEREFHDRTIAYLQLAATHFHLRVAKIANLNAVQKIPALSLREKECVLWVARGKSSWDIGVIMRISENTVNFHIKNVMRKLGTSSRTVAAIKAISLGIIEL</sequence>
<proteinExistence type="inferred from homology"/>